<gene>
    <name type="ordered locus">MT0916</name>
</gene>
<evidence type="ECO:0000250" key="1"/>
<evidence type="ECO:0000255" key="2"/>
<evidence type="ECO:0000305" key="3"/>
<organism>
    <name type="scientific">Mycobacterium tuberculosis (strain CDC 1551 / Oshkosh)</name>
    <dbReference type="NCBI Taxonomy" id="83331"/>
    <lineage>
        <taxon>Bacteria</taxon>
        <taxon>Bacillati</taxon>
        <taxon>Actinomycetota</taxon>
        <taxon>Actinomycetes</taxon>
        <taxon>Mycobacteriales</taxon>
        <taxon>Mycobacteriaceae</taxon>
        <taxon>Mycobacterium</taxon>
        <taxon>Mycobacterium tuberculosis complex</taxon>
    </lineage>
</organism>
<proteinExistence type="inferred from homology"/>
<name>Y892_MYCTO</name>
<sequence length="495" mass="55039">MTGRCPTVAVVGAGMSGMCVAITLLSAGITDVCIYEKADDVGGTWRDNTYPGLTCDVPSRLYQYSFAKNPNWTQMFSRGGEIQDYLRGIAERYGLRHRIRFGATVVSARFDDGRWVLRTDSGTESTVDFLISATGVLHHPRIPPIAGLDDFRGTVFHSARWDHTVPLLGRRIAVIGTGSTGVQLVCGLAGVAGKVTMFQRTAQWVLPWPNPRYSKLARVFHRAFPCLGSLAYKAYSLSFETFAVALSNPGLHRKLVGAVCRASLRRVRDPRLRRALTPDYEPMCKRLVMSGGFYRAIQRDDVELVTAGIDHVEHRGIVTDDGVLHEVDVIVLATGFDSHAFFRPMQLTGRDGIRIDDVWQDGPHAHQTVAIPGFPNFFMMLGPHSPVGNFPLTAVAESQAEHIVQWIKRWRHGEFDTMEPKSAATEAYNTVLRAAMPNTVWTTGCDSWYLNKDGIPEVWPFAPAKHRAMLANLHPEEYDLRRYAAVRATSRPQSA</sequence>
<reference key="1">
    <citation type="journal article" date="2002" name="J. Bacteriol.">
        <title>Whole-genome comparison of Mycobacterium tuberculosis clinical and laboratory strains.</title>
        <authorList>
            <person name="Fleischmann R.D."/>
            <person name="Alland D."/>
            <person name="Eisen J.A."/>
            <person name="Carpenter L."/>
            <person name="White O."/>
            <person name="Peterson J.D."/>
            <person name="DeBoy R.T."/>
            <person name="Dodson R.J."/>
            <person name="Gwinn M.L."/>
            <person name="Haft D.H."/>
            <person name="Hickey E.K."/>
            <person name="Kolonay J.F."/>
            <person name="Nelson W.C."/>
            <person name="Umayam L.A."/>
            <person name="Ermolaeva M.D."/>
            <person name="Salzberg S.L."/>
            <person name="Delcher A."/>
            <person name="Utterback T.R."/>
            <person name="Weidman J.F."/>
            <person name="Khouri H.M."/>
            <person name="Gill J."/>
            <person name="Mikula A."/>
            <person name="Bishai W."/>
            <person name="Jacobs W.R. Jr."/>
            <person name="Venter J.C."/>
            <person name="Fraser C.M."/>
        </authorList>
    </citation>
    <scope>NUCLEOTIDE SEQUENCE [LARGE SCALE GENOMIC DNA]</scope>
    <source>
        <strain>CDC 1551 / Oshkosh</strain>
    </source>
</reference>
<dbReference type="EC" id="1.14.13.-"/>
<dbReference type="EMBL" id="AE000516">
    <property type="protein sequence ID" value="AAK45162.1"/>
    <property type="molecule type" value="Genomic_DNA"/>
</dbReference>
<dbReference type="PIR" id="A70782">
    <property type="entry name" value="A70782"/>
</dbReference>
<dbReference type="RefSeq" id="WP_003404651.1">
    <property type="nucleotide sequence ID" value="NZ_KK341227.1"/>
</dbReference>
<dbReference type="SMR" id="P9WNG0"/>
<dbReference type="KEGG" id="mtc:MT0916"/>
<dbReference type="PATRIC" id="fig|83331.31.peg.984"/>
<dbReference type="HOGENOM" id="CLU_006937_7_1_11"/>
<dbReference type="Proteomes" id="UP000001020">
    <property type="component" value="Chromosome"/>
</dbReference>
<dbReference type="GO" id="GO:0050660">
    <property type="term" value="F:flavin adenine dinucleotide binding"/>
    <property type="evidence" value="ECO:0007669"/>
    <property type="project" value="InterPro"/>
</dbReference>
<dbReference type="GO" id="GO:0004499">
    <property type="term" value="F:N,N-dimethylaniline monooxygenase activity"/>
    <property type="evidence" value="ECO:0007669"/>
    <property type="project" value="InterPro"/>
</dbReference>
<dbReference type="GO" id="GO:0050661">
    <property type="term" value="F:NADP binding"/>
    <property type="evidence" value="ECO:0007669"/>
    <property type="project" value="InterPro"/>
</dbReference>
<dbReference type="Gene3D" id="3.50.50.60">
    <property type="entry name" value="FAD/NAD(P)-binding domain"/>
    <property type="match status" value="2"/>
</dbReference>
<dbReference type="InterPro" id="IPR051209">
    <property type="entry name" value="FAD-bind_Monooxygenase_sf"/>
</dbReference>
<dbReference type="InterPro" id="IPR036188">
    <property type="entry name" value="FAD/NAD-bd_sf"/>
</dbReference>
<dbReference type="InterPro" id="IPR020946">
    <property type="entry name" value="Flavin_mOase-like"/>
</dbReference>
<dbReference type="PANTHER" id="PTHR42877:SF4">
    <property type="entry name" value="FAD_NAD(P)-BINDING DOMAIN-CONTAINING PROTEIN-RELATED"/>
    <property type="match status" value="1"/>
</dbReference>
<dbReference type="PANTHER" id="PTHR42877">
    <property type="entry name" value="L-ORNITHINE N(5)-MONOOXYGENASE-RELATED"/>
    <property type="match status" value="1"/>
</dbReference>
<dbReference type="Pfam" id="PF00743">
    <property type="entry name" value="FMO-like"/>
    <property type="match status" value="1"/>
</dbReference>
<dbReference type="PRINTS" id="PR00411">
    <property type="entry name" value="PNDRDTASEI"/>
</dbReference>
<dbReference type="SUPFAM" id="SSF51905">
    <property type="entry name" value="FAD/NAD(P)-binding domain"/>
    <property type="match status" value="2"/>
</dbReference>
<protein>
    <recommendedName>
        <fullName>Uncharacterized monooxygenase MT0916</fullName>
        <ecNumber>1.14.13.-</ecNumber>
    </recommendedName>
</protein>
<keyword id="KW-0274">FAD</keyword>
<keyword id="KW-0285">Flavoprotein</keyword>
<keyword id="KW-0503">Monooxygenase</keyword>
<keyword id="KW-0521">NADP</keyword>
<keyword id="KW-0560">Oxidoreductase</keyword>
<keyword id="KW-1185">Reference proteome</keyword>
<comment type="cofactor">
    <cofactor evidence="1">
        <name>FAD</name>
        <dbReference type="ChEBI" id="CHEBI:57692"/>
    </cofactor>
</comment>
<comment type="similarity">
    <text evidence="3">Belongs to the FAD-binding monooxygenase family.</text>
</comment>
<accession>P9WNG0</accession>
<accession>L0T532</accession>
<accession>P64745</accession>
<accession>Q10532</accession>
<feature type="chain" id="PRO_0000427133" description="Uncharacterized monooxygenase MT0916">
    <location>
        <begin position="1"/>
        <end position="495"/>
    </location>
</feature>
<feature type="binding site" evidence="1">
    <location>
        <position position="16"/>
    </location>
    <ligand>
        <name>FAD</name>
        <dbReference type="ChEBI" id="CHEBI:57692"/>
    </ligand>
</feature>
<feature type="binding site" evidence="1">
    <location>
        <position position="36"/>
    </location>
    <ligand>
        <name>FAD</name>
        <dbReference type="ChEBI" id="CHEBI:57692"/>
    </ligand>
</feature>
<feature type="binding site" evidence="1">
    <location>
        <position position="45"/>
    </location>
    <ligand>
        <name>FAD</name>
        <dbReference type="ChEBI" id="CHEBI:57692"/>
    </ligand>
</feature>
<feature type="binding site" evidence="1">
    <location>
        <position position="56"/>
    </location>
    <ligand>
        <name>FAD</name>
        <dbReference type="ChEBI" id="CHEBI:57692"/>
    </ligand>
</feature>
<feature type="binding site" evidence="1">
    <location>
        <position position="62"/>
    </location>
    <ligand>
        <name>FAD</name>
        <dbReference type="ChEBI" id="CHEBI:57692"/>
    </ligand>
</feature>
<feature type="binding site" evidence="1">
    <location>
        <position position="105"/>
    </location>
    <ligand>
        <name>FAD</name>
        <dbReference type="ChEBI" id="CHEBI:57692"/>
    </ligand>
</feature>
<feature type="site" description="Transition state stabilizer" evidence="2">
    <location>
        <position position="286"/>
    </location>
</feature>